<name>MTLN_MOUSE</name>
<sequence>MADVSERTLQVSVLVAFASGVVLGWQANRLRRRYLDWRKRRLQDKLATTQKKLDLA</sequence>
<evidence type="ECO:0000250" key="1">
    <source>
        <dbReference type="UniProtKB" id="Q8NCU8"/>
    </source>
</evidence>
<evidence type="ECO:0000255" key="2"/>
<evidence type="ECO:0000269" key="3">
    <source>
    </source>
</evidence>
<evidence type="ECO:0000269" key="4">
    <source>
    </source>
</evidence>
<evidence type="ECO:0000269" key="5">
    <source>
    </source>
</evidence>
<evidence type="ECO:0000269" key="6">
    <source>
    </source>
</evidence>
<evidence type="ECO:0000269" key="7">
    <source>
    </source>
</evidence>
<evidence type="ECO:0000269" key="8">
    <source>
    </source>
</evidence>
<evidence type="ECO:0000303" key="9">
    <source>
    </source>
</evidence>
<evidence type="ECO:0000303" key="10">
    <source>
    </source>
</evidence>
<evidence type="ECO:0000303" key="11">
    <source>
    </source>
</evidence>
<evidence type="ECO:0000303" key="12">
    <source>
    </source>
</evidence>
<evidence type="ECO:0000305" key="13"/>
<evidence type="ECO:0000305" key="14">
    <source>
    </source>
</evidence>
<dbReference type="EMBL" id="AK027942">
    <property type="protein sequence ID" value="BAC25674.1"/>
    <property type="molecule type" value="mRNA"/>
</dbReference>
<dbReference type="EMBL" id="AK165423">
    <property type="protein sequence ID" value="BAE38178.1"/>
    <property type="molecule type" value="mRNA"/>
</dbReference>
<dbReference type="EMBL" id="BC116797">
    <property type="status" value="NOT_ANNOTATED_CDS"/>
    <property type="molecule type" value="mRNA"/>
</dbReference>
<dbReference type="EMBL" id="BC116799">
    <property type="status" value="NOT_ANNOTATED_CDS"/>
    <property type="molecule type" value="mRNA"/>
</dbReference>
<dbReference type="RefSeq" id="NP_001371064.1">
    <property type="nucleotide sequence ID" value="NM_001384135.1"/>
</dbReference>
<dbReference type="SMR" id="Q8BT35"/>
<dbReference type="FunCoup" id="Q8BT35">
    <property type="interactions" value="147"/>
</dbReference>
<dbReference type="STRING" id="10090.ENSMUSP00000141107"/>
<dbReference type="PhosphoSitePlus" id="Q8BT35"/>
<dbReference type="jPOST" id="Q8BT35"/>
<dbReference type="PaxDb" id="10090-ENSMUSP00000141107"/>
<dbReference type="PeptideAtlas" id="Q8BT35"/>
<dbReference type="Antibodypedia" id="82231">
    <property type="antibodies" value="1 antibodies from 1 providers"/>
</dbReference>
<dbReference type="Ensembl" id="ENSMUST00000135091.2">
    <property type="protein sequence ID" value="ENSMUSP00000141107.2"/>
    <property type="gene ID" value="ENSMUSG00000051319.7"/>
</dbReference>
<dbReference type="GeneID" id="67885"/>
<dbReference type="AGR" id="MGI:1915135"/>
<dbReference type="MGI" id="MGI:1915135">
    <property type="gene designation" value="Mtln"/>
</dbReference>
<dbReference type="VEuPathDB" id="HostDB:ENSMUSG00000051319"/>
<dbReference type="eggNOG" id="ENOG502S9AW">
    <property type="taxonomic scope" value="Eukaryota"/>
</dbReference>
<dbReference type="GeneTree" id="ENSGT00390000007551"/>
<dbReference type="HOGENOM" id="CLU_198667_0_0_1"/>
<dbReference type="InParanoid" id="Q8BT35"/>
<dbReference type="OMA" id="FVAGWQA"/>
<dbReference type="ChiTaRS" id="Mtln">
    <property type="organism name" value="mouse"/>
</dbReference>
<dbReference type="PRO" id="PR:Q8BT35"/>
<dbReference type="Proteomes" id="UP000000589">
    <property type="component" value="Chromosome 2"/>
</dbReference>
<dbReference type="RNAct" id="Q8BT35">
    <property type="molecule type" value="protein"/>
</dbReference>
<dbReference type="Bgee" id="ENSMUSG00000051319">
    <property type="expression patterns" value="Expressed in interventricular septum and 230 other cell types or tissues"/>
</dbReference>
<dbReference type="GO" id="GO:0005743">
    <property type="term" value="C:mitochondrial inner membrane"/>
    <property type="evidence" value="ECO:0000314"/>
    <property type="project" value="UniProtKB"/>
</dbReference>
<dbReference type="GO" id="GO:0005739">
    <property type="term" value="C:mitochondrion"/>
    <property type="evidence" value="ECO:0000314"/>
    <property type="project" value="UniProtKB"/>
</dbReference>
<dbReference type="GO" id="GO:0045333">
    <property type="term" value="P:cellular respiration"/>
    <property type="evidence" value="ECO:0000315"/>
    <property type="project" value="UniProtKB"/>
</dbReference>
<dbReference type="GO" id="GO:0006635">
    <property type="term" value="P:fatty acid beta-oxidation"/>
    <property type="evidence" value="ECO:0000250"/>
    <property type="project" value="UniProtKB"/>
</dbReference>
<dbReference type="GO" id="GO:0006629">
    <property type="term" value="P:lipid metabolic process"/>
    <property type="evidence" value="ECO:0000315"/>
    <property type="project" value="UniProtKB"/>
</dbReference>
<dbReference type="GO" id="GO:0032000">
    <property type="term" value="P:positive regulation of fatty acid beta-oxidation"/>
    <property type="evidence" value="ECO:0000315"/>
    <property type="project" value="UniProtKB"/>
</dbReference>
<dbReference type="GO" id="GO:0010918">
    <property type="term" value="P:positive regulation of mitochondrial membrane potential"/>
    <property type="evidence" value="ECO:0000250"/>
    <property type="project" value="UniProtKB"/>
</dbReference>
<dbReference type="GO" id="GO:0031334">
    <property type="term" value="P:positive regulation of protein-containing complex assembly"/>
    <property type="evidence" value="ECO:0000315"/>
    <property type="project" value="UniProtKB"/>
</dbReference>
<dbReference type="GO" id="GO:0051284">
    <property type="term" value="P:positive regulation of sequestering of calcium ion"/>
    <property type="evidence" value="ECO:0000314"/>
    <property type="project" value="UniProtKB"/>
</dbReference>
<dbReference type="GO" id="GO:0051146">
    <property type="term" value="P:striated muscle cell differentiation"/>
    <property type="evidence" value="ECO:0000315"/>
    <property type="project" value="UniProtKB"/>
</dbReference>
<dbReference type="GO" id="GO:0070328">
    <property type="term" value="P:triglyceride homeostasis"/>
    <property type="evidence" value="ECO:0000250"/>
    <property type="project" value="UniProtKB"/>
</dbReference>
<dbReference type="InterPro" id="IPR038778">
    <property type="entry name" value="Mtln"/>
</dbReference>
<dbReference type="PANTHER" id="PTHR37154">
    <property type="entry name" value="MITOREGULIN"/>
    <property type="match status" value="1"/>
</dbReference>
<dbReference type="PANTHER" id="PTHR37154:SF1">
    <property type="entry name" value="MITOREGULIN"/>
    <property type="match status" value="1"/>
</dbReference>
<dbReference type="Pfam" id="PF22002">
    <property type="entry name" value="MTLN"/>
    <property type="match status" value="1"/>
</dbReference>
<protein>
    <recommendedName>
        <fullName evidence="10">Mitoregulin</fullName>
    </recommendedName>
    <alternativeName>
        <fullName evidence="11">Micropeptide in mitochondria</fullName>
    </alternativeName>
    <alternativeName>
        <fullName evidence="9">Micropeptide regulator of beta-oxidation</fullName>
    </alternativeName>
    <alternativeName>
        <fullName evidence="1">Small integral membrane protein 37</fullName>
    </alternativeName>
    <alternativeName>
        <fullName evidence="12">lncRNA-encoded micropeptide</fullName>
    </alternativeName>
</protein>
<keyword id="KW-0903">Direct protein sequencing</keyword>
<keyword id="KW-0472">Membrane</keyword>
<keyword id="KW-0496">Mitochondrion</keyword>
<keyword id="KW-0999">Mitochondrion inner membrane</keyword>
<keyword id="KW-1185">Reference proteome</keyword>
<keyword id="KW-0812">Transmembrane</keyword>
<keyword id="KW-1133">Transmembrane helix</keyword>
<gene>
    <name evidence="10" type="primary">Mtln</name>
    <name evidence="12" type="synonym">Lemp</name>
    <name evidence="9" type="synonym">Moxi</name>
    <name evidence="11" type="synonym">Mpm</name>
    <name evidence="1" type="synonym">Smim37</name>
</gene>
<feature type="initiator methionine" description="Removed" evidence="1">
    <location>
        <position position="1"/>
    </location>
</feature>
<feature type="chain" id="PRO_0000337007" description="Mitoregulin">
    <location>
        <begin position="2"/>
        <end position="56"/>
    </location>
</feature>
<feature type="topological domain" description="Mitochondrial matrix" evidence="14">
    <location>
        <begin position="2"/>
        <end position="9"/>
    </location>
</feature>
<feature type="transmembrane region" description="Helical" evidence="2">
    <location>
        <begin position="10"/>
        <end position="27"/>
    </location>
</feature>
<feature type="topological domain" description="Mitochondrial intermembrane" evidence="14">
    <location>
        <begin position="28"/>
        <end position="56"/>
    </location>
</feature>
<proteinExistence type="evidence at protein level"/>
<reference key="1">
    <citation type="journal article" date="2005" name="Science">
        <title>The transcriptional landscape of the mammalian genome.</title>
        <authorList>
            <person name="Carninci P."/>
            <person name="Kasukawa T."/>
            <person name="Katayama S."/>
            <person name="Gough J."/>
            <person name="Frith M.C."/>
            <person name="Maeda N."/>
            <person name="Oyama R."/>
            <person name="Ravasi T."/>
            <person name="Lenhard B."/>
            <person name="Wells C."/>
            <person name="Kodzius R."/>
            <person name="Shimokawa K."/>
            <person name="Bajic V.B."/>
            <person name="Brenner S.E."/>
            <person name="Batalov S."/>
            <person name="Forrest A.R."/>
            <person name="Zavolan M."/>
            <person name="Davis M.J."/>
            <person name="Wilming L.G."/>
            <person name="Aidinis V."/>
            <person name="Allen J.E."/>
            <person name="Ambesi-Impiombato A."/>
            <person name="Apweiler R."/>
            <person name="Aturaliya R.N."/>
            <person name="Bailey T.L."/>
            <person name="Bansal M."/>
            <person name="Baxter L."/>
            <person name="Beisel K.W."/>
            <person name="Bersano T."/>
            <person name="Bono H."/>
            <person name="Chalk A.M."/>
            <person name="Chiu K.P."/>
            <person name="Choudhary V."/>
            <person name="Christoffels A."/>
            <person name="Clutterbuck D.R."/>
            <person name="Crowe M.L."/>
            <person name="Dalla E."/>
            <person name="Dalrymple B.P."/>
            <person name="de Bono B."/>
            <person name="Della Gatta G."/>
            <person name="di Bernardo D."/>
            <person name="Down T."/>
            <person name="Engstrom P."/>
            <person name="Fagiolini M."/>
            <person name="Faulkner G."/>
            <person name="Fletcher C.F."/>
            <person name="Fukushima T."/>
            <person name="Furuno M."/>
            <person name="Futaki S."/>
            <person name="Gariboldi M."/>
            <person name="Georgii-Hemming P."/>
            <person name="Gingeras T.R."/>
            <person name="Gojobori T."/>
            <person name="Green R.E."/>
            <person name="Gustincich S."/>
            <person name="Harbers M."/>
            <person name="Hayashi Y."/>
            <person name="Hensch T.K."/>
            <person name="Hirokawa N."/>
            <person name="Hill D."/>
            <person name="Huminiecki L."/>
            <person name="Iacono M."/>
            <person name="Ikeo K."/>
            <person name="Iwama A."/>
            <person name="Ishikawa T."/>
            <person name="Jakt M."/>
            <person name="Kanapin A."/>
            <person name="Katoh M."/>
            <person name="Kawasawa Y."/>
            <person name="Kelso J."/>
            <person name="Kitamura H."/>
            <person name="Kitano H."/>
            <person name="Kollias G."/>
            <person name="Krishnan S.P."/>
            <person name="Kruger A."/>
            <person name="Kummerfeld S.K."/>
            <person name="Kurochkin I.V."/>
            <person name="Lareau L.F."/>
            <person name="Lazarevic D."/>
            <person name="Lipovich L."/>
            <person name="Liu J."/>
            <person name="Liuni S."/>
            <person name="McWilliam S."/>
            <person name="Madan Babu M."/>
            <person name="Madera M."/>
            <person name="Marchionni L."/>
            <person name="Matsuda H."/>
            <person name="Matsuzawa S."/>
            <person name="Miki H."/>
            <person name="Mignone F."/>
            <person name="Miyake S."/>
            <person name="Morris K."/>
            <person name="Mottagui-Tabar S."/>
            <person name="Mulder N."/>
            <person name="Nakano N."/>
            <person name="Nakauchi H."/>
            <person name="Ng P."/>
            <person name="Nilsson R."/>
            <person name="Nishiguchi S."/>
            <person name="Nishikawa S."/>
            <person name="Nori F."/>
            <person name="Ohara O."/>
            <person name="Okazaki Y."/>
            <person name="Orlando V."/>
            <person name="Pang K.C."/>
            <person name="Pavan W.J."/>
            <person name="Pavesi G."/>
            <person name="Pesole G."/>
            <person name="Petrovsky N."/>
            <person name="Piazza S."/>
            <person name="Reed J."/>
            <person name="Reid J.F."/>
            <person name="Ring B.Z."/>
            <person name="Ringwald M."/>
            <person name="Rost B."/>
            <person name="Ruan Y."/>
            <person name="Salzberg S.L."/>
            <person name="Sandelin A."/>
            <person name="Schneider C."/>
            <person name="Schoenbach C."/>
            <person name="Sekiguchi K."/>
            <person name="Semple C.A."/>
            <person name="Seno S."/>
            <person name="Sessa L."/>
            <person name="Sheng Y."/>
            <person name="Shibata Y."/>
            <person name="Shimada H."/>
            <person name="Shimada K."/>
            <person name="Silva D."/>
            <person name="Sinclair B."/>
            <person name="Sperling S."/>
            <person name="Stupka E."/>
            <person name="Sugiura K."/>
            <person name="Sultana R."/>
            <person name="Takenaka Y."/>
            <person name="Taki K."/>
            <person name="Tammoja K."/>
            <person name="Tan S.L."/>
            <person name="Tang S."/>
            <person name="Taylor M.S."/>
            <person name="Tegner J."/>
            <person name="Teichmann S.A."/>
            <person name="Ueda H.R."/>
            <person name="van Nimwegen E."/>
            <person name="Verardo R."/>
            <person name="Wei C.L."/>
            <person name="Yagi K."/>
            <person name="Yamanishi H."/>
            <person name="Zabarovsky E."/>
            <person name="Zhu S."/>
            <person name="Zimmer A."/>
            <person name="Hide W."/>
            <person name="Bult C."/>
            <person name="Grimmond S.M."/>
            <person name="Teasdale R.D."/>
            <person name="Liu E.T."/>
            <person name="Brusic V."/>
            <person name="Quackenbush J."/>
            <person name="Wahlestedt C."/>
            <person name="Mattick J.S."/>
            <person name="Hume D.A."/>
            <person name="Kai C."/>
            <person name="Sasaki D."/>
            <person name="Tomaru Y."/>
            <person name="Fukuda S."/>
            <person name="Kanamori-Katayama M."/>
            <person name="Suzuki M."/>
            <person name="Aoki J."/>
            <person name="Arakawa T."/>
            <person name="Iida J."/>
            <person name="Imamura K."/>
            <person name="Itoh M."/>
            <person name="Kato T."/>
            <person name="Kawaji H."/>
            <person name="Kawagashira N."/>
            <person name="Kawashima T."/>
            <person name="Kojima M."/>
            <person name="Kondo S."/>
            <person name="Konno H."/>
            <person name="Nakano K."/>
            <person name="Ninomiya N."/>
            <person name="Nishio T."/>
            <person name="Okada M."/>
            <person name="Plessy C."/>
            <person name="Shibata K."/>
            <person name="Shiraki T."/>
            <person name="Suzuki S."/>
            <person name="Tagami M."/>
            <person name="Waki K."/>
            <person name="Watahiki A."/>
            <person name="Okamura-Oho Y."/>
            <person name="Suzuki H."/>
            <person name="Kawai J."/>
            <person name="Hayashizaki Y."/>
        </authorList>
    </citation>
    <scope>NUCLEOTIDE SEQUENCE [LARGE SCALE MRNA]</scope>
    <source>
        <strain>C57BL/6J</strain>
        <tissue>Embryo</tissue>
        <tissue>Kidney</tissue>
    </source>
</reference>
<reference key="2">
    <citation type="journal article" date="2004" name="Genome Res.">
        <title>The status, quality, and expansion of the NIH full-length cDNA project: the Mammalian Gene Collection (MGC).</title>
        <authorList>
            <consortium name="The MGC Project Team"/>
        </authorList>
    </citation>
    <scope>NUCLEOTIDE SEQUENCE [LARGE SCALE MRNA]</scope>
    <source>
        <tissue>Brain</tissue>
    </source>
</reference>
<reference key="3">
    <citation type="journal article" date="2018" name="Cell Rep.">
        <title>MOXI Is a Mitochondrial Micropeptide That Enhances Fatty Acid beta-Oxidation.</title>
        <authorList>
            <person name="Makarewich C.A."/>
            <person name="Baskin K.K."/>
            <person name="Munir A.Z."/>
            <person name="Bezprozvannaya S."/>
            <person name="Sharma G."/>
            <person name="Khemtong C."/>
            <person name="Shah A.M."/>
            <person name="McAnally J.R."/>
            <person name="Malloy C.R."/>
            <person name="Szweda L.I."/>
            <person name="Bassel-Duby R."/>
            <person name="Olson E.N."/>
        </authorList>
    </citation>
    <scope>PROTEIN SEQUENCE OF 2-11 AND 17-30</scope>
    <scope>IDENTIFICATION BY MASS SPECTROMETRY</scope>
    <scope>FUNCTION</scope>
    <scope>INTERACTION WITH HADHA AND HADHB</scope>
    <scope>SUBCELLULAR LOCATION</scope>
    <scope>TISSUE SPECIFICITY</scope>
</reference>
<reference key="4">
    <citation type="journal article" date="2018" name="Cell Rep.">
        <title>Mitoregulin: a lncRNA-encoded microprotein that supports mitochondrial supercomplexes and respiratory efficiency.</title>
        <authorList>
            <person name="Stein C.S."/>
            <person name="Jadiya P."/>
            <person name="Zhang X."/>
            <person name="McLendon J.M."/>
            <person name="Abouassaly G.M."/>
            <person name="Witmer N.H."/>
            <person name="Anderson E.J."/>
            <person name="Elrod J.W."/>
            <person name="Boudreau R.L."/>
        </authorList>
    </citation>
    <scope>FUNCTION</scope>
    <scope>SUBCELLULAR LOCATION</scope>
    <scope>TISSUE SPECIFICITY</scope>
    <scope>DISRUPTION PHENOTYPE</scope>
    <scope>TOPOLOGY</scope>
</reference>
<reference key="5">
    <citation type="journal article" date="2019" name="Cell Death Dis.">
        <title>A novel mitochondrial micropeptide MPM enhances mitochondrial respiratory activity and promotes myogenic differentiation.</title>
        <authorList>
            <person name="Lin Y.F."/>
            <person name="Xiao M.H."/>
            <person name="Chen H.X."/>
            <person name="Meng Y."/>
            <person name="Zhao N."/>
            <person name="Yang L."/>
            <person name="Tang H."/>
            <person name="Wang J.L."/>
            <person name="Liu X."/>
            <person name="Zhu Y."/>
            <person name="Zhuang S.M."/>
        </authorList>
    </citation>
    <scope>FUNCTION</scope>
    <scope>SUBCELLULAR LOCATION</scope>
    <scope>TISSUE SPECIFICITY</scope>
    <scope>DEVELOPMENTAL STAGE</scope>
</reference>
<reference key="6">
    <citation type="journal article" date="2019" name="Proc. Natl. Acad. Sci. U.S.A.">
        <title>LINC00116 codes for a mitochondrial peptide linking respiration and lipid metabolism.</title>
        <authorList>
            <person name="Chugunova A."/>
            <person name="Loseva E."/>
            <person name="Mazin P."/>
            <person name="Mitina A."/>
            <person name="Navalayeu T."/>
            <person name="Bilan D."/>
            <person name="Vishnyakova P."/>
            <person name="Marey M."/>
            <person name="Golovina A."/>
            <person name="Serebryakova M."/>
            <person name="Pletnev P."/>
            <person name="Rubtsova M."/>
            <person name="Mair W."/>
            <person name="Vanyushkina A."/>
            <person name="Khaitovich P."/>
            <person name="Belousov V."/>
            <person name="Vysokikh M."/>
            <person name="Sergiev P."/>
            <person name="Dontsova O."/>
        </authorList>
    </citation>
    <scope>FUNCTION</scope>
    <scope>INTERACTION WITH CYB5R3</scope>
    <scope>SUBCELLULAR LOCATION</scope>
</reference>
<reference key="7">
    <citation type="journal article" date="2020" name="Cell Death Dis.">
        <title>The micropeptide LEMP plays an evolutionarily conserved role in myogenesis.</title>
        <authorList>
            <person name="Wang L."/>
            <person name="Fan J."/>
            <person name="Han L."/>
            <person name="Qi H."/>
            <person name="Wang Y."/>
            <person name="Wang H."/>
            <person name="Chen S."/>
            <person name="Du L."/>
            <person name="Li S."/>
            <person name="Zhang Y."/>
            <person name="Tang W."/>
            <person name="Ge G."/>
            <person name="Pan W."/>
            <person name="Hu P."/>
            <person name="Cheng H."/>
        </authorList>
    </citation>
    <scope>FUNCTION</scope>
    <scope>SUBCELLULAR LOCATION</scope>
    <scope>TISSUE SPECIFICITY</scope>
    <scope>DISRUPTION PHENOTYPE</scope>
</reference>
<reference key="8">
    <citation type="journal article" date="2020" name="Stem Cell Reports">
        <title>Mitoregulin Controls beta-Oxidation in Human and Mouse Adipocytes.</title>
        <authorList>
            <person name="Friesen M."/>
            <person name="Warren C.R."/>
            <person name="Yu H."/>
            <person name="Toyohara T."/>
            <person name="Ding Q."/>
            <person name="Florido M.H.C."/>
            <person name="Sayre C."/>
            <person name="Pope B.D."/>
            <person name="Goff L.A."/>
            <person name="Rinn J.L."/>
            <person name="Cowan C.A."/>
        </authorList>
    </citation>
    <scope>FUNCTION</scope>
</reference>
<organism>
    <name type="scientific">Mus musculus</name>
    <name type="common">Mouse</name>
    <dbReference type="NCBI Taxonomy" id="10090"/>
    <lineage>
        <taxon>Eukaryota</taxon>
        <taxon>Metazoa</taxon>
        <taxon>Chordata</taxon>
        <taxon>Craniata</taxon>
        <taxon>Vertebrata</taxon>
        <taxon>Euteleostomi</taxon>
        <taxon>Mammalia</taxon>
        <taxon>Eutheria</taxon>
        <taxon>Euarchontoglires</taxon>
        <taxon>Glires</taxon>
        <taxon>Rodentia</taxon>
        <taxon>Myomorpha</taxon>
        <taxon>Muroidea</taxon>
        <taxon>Muridae</taxon>
        <taxon>Murinae</taxon>
        <taxon>Mus</taxon>
        <taxon>Mus</taxon>
    </lineage>
</organism>
<accession>Q8BT35</accession>
<comment type="function">
    <text evidence="1 3 4 5 6 7 8">Positively regulates mitochondrial complex assembly and/or stability (PubMed:29949756). Increases mitochondrial membrane potential while decreasing mitochondrial reactive oxygen species (By similarity). Increases mitochondrial respiration rate (PubMed:31296841). Increased mitochondrial respiratory activity promotes myogenic differentiation which facilitates muscle growth and regeneration (PubMed:31296841, PubMed:32393776). Increases mitochondrial calcium retention capacity (PubMed:29949756). Plays a role in maintenance of cellular lipid composition through its interaction with cytochrome b5 reductase CYB5R3 which is required for mitochondrial respiratory complex I activity (PubMed:30796188). Interacts with the mitochondrial trifunctional enzyme complex (MTE) and enhances fatty acid beta-oxidation (PubMed:29949755, PubMed:32243843). Not required for MTE formation or stability (PubMed:29949755). Modulates triglyceride clearance in adipocytes through its role in regulating fatty acid beta-oxidation and lipolysis (PubMed:32243843).</text>
</comment>
<comment type="subunit">
    <text evidence="1 3 6">Interacts with mitochondrial trifunctional enzyme, a heterotetrameric complex composed of 2 HADHA subunits and 2 HADHB subunits (PubMed:29949755). Interacts with cytochrome b5 reductase CYB5R3; the interaction is required to maintain cellular lipid composition and leads to stimulation of mitochondrial respiratory complex I activity (PubMed:31296841). Interacts with ATP synthase subunit ATP5F1B/ATP5B (By similarity).</text>
</comment>
<comment type="subcellular location">
    <subcellularLocation>
        <location evidence="3 4 5 6 8">Mitochondrion inner membrane</location>
        <topology evidence="13">Single-pass membrane protein</topology>
    </subcellularLocation>
    <text evidence="4">Preferentially binds to cardiolipin relative to other common cell membrane lipids.</text>
</comment>
<comment type="tissue specificity">
    <text evidence="3 4 6 8">Enriched in heart and skeletal muscle (at protein level) (PubMed:29949755, PubMed:29949756, PubMed:31296841). Also enriched in adipose tissue with lower levels detected in liver, pancreas and brain (at protein level) (PubMed:29949756). Higher levels in differentiated myotubes than in satellite cells (PubMed:32393776).</text>
</comment>
<comment type="developmental stage">
    <text evidence="6">Levels increase after birth and remain high at postnatal days 14 and 21.</text>
</comment>
<comment type="disruption phenotype">
    <text evidence="4 8">No visible phenotype (PubMed:29949756). Mutants are viable and develop normally with no overt phenotypes later in life (PubMed:29949756). In the fed state, no effect on mitochondrial respiratory activities in cardiac or skeletal muscle fibers but, in fasted mutants, skeletal muscle fibers and left ventricular fibers show significantly lower rates of maximal fatty acid oxidation relative to wild-type controls (PubMed:29949756). Left ventricular fibers also show reduced mitochondrial calcium retention capacity (PubMed:29949756). Aberrant distribution of respiratory chain complex I (CI) with distinct loss of a high-molecular weight supercomplex and concomitant increase in free or disassembled CI-associated complexes (PubMed:29949756). Severely decreased presence of dimers of the mitochondrial 2-oxoglutarate dehydrogenase OGDH and the mitochondrial acyl-CoA dehydrogenase ACAD9 (PubMed:29949756). Significantly altered distribution of the mitochondrial acyl-CoA dehydrogenase ACADVL/VLCAD (PubMed:29949756). Impaired muscle formation, muscle weakness and impaired muscle regeneration due to defects in satellite cell differention (PubMed:32393776).</text>
</comment>
<comment type="similarity">
    <text evidence="13">Belongs to the mitoregulin family.</text>
</comment>